<protein>
    <recommendedName>
        <fullName evidence="1">Spike glycoprotein</fullName>
        <shortName evidence="1">S glycoprotein</shortName>
    </recommendedName>
    <alternativeName>
        <fullName evidence="1">E2</fullName>
    </alternativeName>
    <alternativeName>
        <fullName evidence="1">Peplomer protein</fullName>
    </alternativeName>
</protein>
<sequence length="1449" mass="159958">MKKLFVVLVVMPLIYGDNFPCSKLTNRTIGNHWNLIETFLLNYSSRLSPNSDVVLGDYFPTVQPWFNCIHNNSNDLYVTLENLKALYWDYATENSTWNHKQRLNVVVNGYPYSITVTTTRNFNSAEGAIICICKGSPPTTTTESSLTCNWGSECRLNHKFPICPSNSEANCGNMLYGLQWFADAVVAYLHGASYRISFENQWSGTVTLGDMRATTLETAGTLVDLWWFNPVYDVSYYRVNNKNGTTVVSNCTDQCASYVANVFTTQPGGFIPSDFSFNNWFLLTNSSTLVSGKLVTKQPLLVNCLWPVPSFEEAASTFCFEGAGFDQCNGAVLNNTVDVIRFNLNFTTNVQSGKGATVFSLNTTGGVTLEISCYNDTVSDSSFSSYGEIPFGVTDGPRYCYVLYNGTALKYLGTLPPSVKEIAISKWGHFYINGYNFFSTFPIDCISFNLTTGDSDVFWTIAYTSYTEALVQVENTAITKVTYCNSYVNNIKCSQLTANLNNGFYPVSSSEVGFVNKSVVLLPTFYTHTIVNITIGLGMKRSGYGQPIASTLSNITLPMQDNNIDVYCIRSDQFSVYVHSTCKSALWDNVFKRNCTDVLDATAVIKTGTCPFSFDKLNNYLTFNKFCLSLSPVGANCKFDVAARTRANDQVVRSLYVIYEEGDNIVGVPSDNSGLHDLSVLHLDSCTDYNIYGRSGVGIIRQTNRTLLSGLYYTSLSGDLLGFKNVSDGVIYSVTPCDVSAQAAVIDGTIVGAITSINSELLGLTHWTTTPNFYYYSIYNYTNDMTRGTAIDSNDVDCEPVITYSNIGVCKNGALVFINVTHSDGDVQPISTGNVTIPTNFTISVQVEYIQVYTTPVSIDCSRYVCNGNPRCNKLLTQYVSACQTIEQALAVGARLENMEVDSMLFVSENALKLASVEAFNSSETLDPIYKEWPNIGGSWLEGLKYILPSDNSKRKYRSAIEDLLFSKVVTSGLGTVDEDYKRCTGGYDIADLVCAQYYNGIMVLPGVANADKMTMYTASLAGGITLGALGGGAVAIPFAVAVQARLNYVALQTDVLNKNQQILASAFNQAIGNITQSFGKVNDAIHQTSRGLATVAKALAKVQDVVNTQGQALSHLTVQLQNNFQAISSSISDIYNRLDELSADAHVDRLITGRLTALNAFVSQTLTRQAEVRASRQLAKDKVNECVRSQSQRFGFCGNGTHLFSLANAAPNGMIFFHAVLLPTAYETVTAWAGICALDGDRTFGLVVKDVQLTLFRNLDDKFYLTPRTMYQPRVATSSDFVQIEGCDVLFVNATLSDLPSIIPDYIDINQTVQDILENFRPNWTVPELTFDIFNATYLNLTGEIDDLEFRSEKLHNTTVELAILIDNINNTLVNLEWLNRIETYVKWPWYVWLLIGLVVIFCIPLLLFCCCSTGCCGCIGCLGSCCHSICSRRQFENYEPIEKVHIH</sequence>
<keyword id="KW-0175">Coiled coil</keyword>
<keyword id="KW-0325">Glycoprotein</keyword>
<keyword id="KW-1043">Host membrane</keyword>
<keyword id="KW-0945">Host-virus interaction</keyword>
<keyword id="KW-0472">Membrane</keyword>
<keyword id="KW-0732">Signal</keyword>
<keyword id="KW-0812">Transmembrane</keyword>
<keyword id="KW-1133">Transmembrane helix</keyword>
<keyword id="KW-1161">Viral attachment to host cell</keyword>
<keyword id="KW-0261">Viral envelope protein</keyword>
<keyword id="KW-0946">Virion</keyword>
<keyword id="KW-0843">Virulence</keyword>
<keyword id="KW-1160">Virus entry into host cell</keyword>
<organism>
    <name type="scientific">Porcine transmissible gastroenteritis coronavirus (strain FS772/70)</name>
    <name type="common">TGEV</name>
    <dbReference type="NCBI Taxonomy" id="11150"/>
    <lineage>
        <taxon>Viruses</taxon>
        <taxon>Riboviria</taxon>
        <taxon>Orthornavirae</taxon>
        <taxon>Pisuviricota</taxon>
        <taxon>Pisoniviricetes</taxon>
        <taxon>Nidovirales</taxon>
        <taxon>Cornidovirineae</taxon>
        <taxon>Coronaviridae</taxon>
        <taxon>Orthocoronavirinae</taxon>
        <taxon>Alphacoronavirus</taxon>
        <taxon>Tegacovirus</taxon>
        <taxon>Alphacoronavirus 1</taxon>
    </lineage>
</organism>
<reference key="1">
    <citation type="journal article" date="1990" name="Virus Res.">
        <title>Sequence of the S gene from a virulent British field isolate of transmissible gastroenteritis virus.</title>
        <authorList>
            <person name="Britton P."/>
            <person name="Page K.W."/>
        </authorList>
    </citation>
    <scope>NUCLEOTIDE SEQUENCE [GENOMIC RNA]</scope>
</reference>
<dbReference type="EMBL" id="X53128">
    <property type="protein sequence ID" value="CAA37285.1"/>
    <property type="molecule type" value="Genomic_RNA"/>
</dbReference>
<dbReference type="PIR" id="B43489">
    <property type="entry name" value="VGIHFS"/>
</dbReference>
<dbReference type="SMR" id="P18450"/>
<dbReference type="GO" id="GO:0044173">
    <property type="term" value="C:host cell endoplasmic reticulum-Golgi intermediate compartment membrane"/>
    <property type="evidence" value="ECO:0007669"/>
    <property type="project" value="UniProtKB-SubCell"/>
</dbReference>
<dbReference type="GO" id="GO:0016020">
    <property type="term" value="C:membrane"/>
    <property type="evidence" value="ECO:0007669"/>
    <property type="project" value="UniProtKB-UniRule"/>
</dbReference>
<dbReference type="GO" id="GO:0019031">
    <property type="term" value="C:viral envelope"/>
    <property type="evidence" value="ECO:0007669"/>
    <property type="project" value="UniProtKB-UniRule"/>
</dbReference>
<dbReference type="GO" id="GO:0055036">
    <property type="term" value="C:virion membrane"/>
    <property type="evidence" value="ECO:0007669"/>
    <property type="project" value="UniProtKB-SubCell"/>
</dbReference>
<dbReference type="GO" id="GO:0075509">
    <property type="term" value="P:endocytosis involved in viral entry into host cell"/>
    <property type="evidence" value="ECO:0007669"/>
    <property type="project" value="UniProtKB-UniRule"/>
</dbReference>
<dbReference type="GO" id="GO:0039654">
    <property type="term" value="P:fusion of virus membrane with host endosome membrane"/>
    <property type="evidence" value="ECO:0007669"/>
    <property type="project" value="UniProtKB-UniRule"/>
</dbReference>
<dbReference type="GO" id="GO:0019064">
    <property type="term" value="P:fusion of virus membrane with host plasma membrane"/>
    <property type="evidence" value="ECO:0007669"/>
    <property type="project" value="UniProtKB-UniRule"/>
</dbReference>
<dbReference type="GO" id="GO:0046813">
    <property type="term" value="P:receptor-mediated virion attachment to host cell"/>
    <property type="evidence" value="ECO:0007669"/>
    <property type="project" value="UniProtKB-UniRule"/>
</dbReference>
<dbReference type="CDD" id="cd22377">
    <property type="entry name" value="TGEV-like_Spike_SD1-2_S1-S2_S2"/>
    <property type="match status" value="1"/>
</dbReference>
<dbReference type="Gene3D" id="1.20.5.300">
    <property type="match status" value="2"/>
</dbReference>
<dbReference type="Gene3D" id="2.60.40.3130">
    <property type="match status" value="1"/>
</dbReference>
<dbReference type="HAMAP" id="MF_04200">
    <property type="entry name" value="ALPHA_CORONA_SPIKE"/>
    <property type="match status" value="1"/>
</dbReference>
<dbReference type="InterPro" id="IPR042552">
    <property type="entry name" value="ALPHA_CORONA_SPIKE"/>
</dbReference>
<dbReference type="InterPro" id="IPR043607">
    <property type="entry name" value="CoV_S1_C"/>
</dbReference>
<dbReference type="InterPro" id="IPR043473">
    <property type="entry name" value="S2_sf_CoV"/>
</dbReference>
<dbReference type="InterPro" id="IPR002551">
    <property type="entry name" value="Spike_S1_CoV"/>
</dbReference>
<dbReference type="InterPro" id="IPR002552">
    <property type="entry name" value="Spike_S2_CoV"/>
</dbReference>
<dbReference type="InterPro" id="IPR043614">
    <property type="entry name" value="Spike_S2_CoV_C"/>
</dbReference>
<dbReference type="InterPro" id="IPR044873">
    <property type="entry name" value="Spike_S2_CoV_HR1"/>
</dbReference>
<dbReference type="InterPro" id="IPR044874">
    <property type="entry name" value="Spike_S2_CoV_HR2"/>
</dbReference>
<dbReference type="Pfam" id="PF01600">
    <property type="entry name" value="CoV_S1"/>
    <property type="match status" value="1"/>
</dbReference>
<dbReference type="Pfam" id="PF19209">
    <property type="entry name" value="CoV_S1_C"/>
    <property type="match status" value="1"/>
</dbReference>
<dbReference type="Pfam" id="PF01601">
    <property type="entry name" value="CoV_S2"/>
    <property type="match status" value="1"/>
</dbReference>
<dbReference type="Pfam" id="PF19214">
    <property type="entry name" value="CoV_S2_C"/>
    <property type="match status" value="1"/>
</dbReference>
<dbReference type="SUPFAM" id="SSF111474">
    <property type="entry name" value="Coronavirus S2 glycoprotein"/>
    <property type="match status" value="2"/>
</dbReference>
<dbReference type="PROSITE" id="PS51923">
    <property type="entry name" value="COV_S2_HR1"/>
    <property type="match status" value="1"/>
</dbReference>
<dbReference type="PROSITE" id="PS51924">
    <property type="entry name" value="COV_S2_HR2"/>
    <property type="match status" value="1"/>
</dbReference>
<name>SPIKE_CVPFS</name>
<feature type="signal peptide" evidence="1">
    <location>
        <begin position="1"/>
        <end position="28"/>
    </location>
</feature>
<feature type="chain" id="PRO_0000037223" description="Spike glycoprotein" evidence="1">
    <location>
        <begin position="29"/>
        <end position="1449"/>
    </location>
</feature>
<feature type="topological domain" description="Virion surface" evidence="1">
    <location>
        <begin position="29"/>
        <end position="1390"/>
    </location>
</feature>
<feature type="transmembrane region" description="Helical" evidence="1">
    <location>
        <begin position="1391"/>
        <end position="1410"/>
    </location>
</feature>
<feature type="topological domain" description="Intravirion" evidence="1">
    <location>
        <begin position="1411"/>
        <end position="1449"/>
    </location>
</feature>
<feature type="region of interest" description="S1">
    <location>
        <begin position="17"/>
        <end position="776"/>
    </location>
</feature>
<feature type="region of interest" description="S1" evidence="1">
    <location>
        <begin position="29"/>
        <end position="776"/>
    </location>
</feature>
<feature type="region of interest" description="Interaction with host ANPEP" evidence="1">
    <location>
        <begin position="657"/>
        <end position="801"/>
    </location>
</feature>
<feature type="region of interest" description="S2" evidence="1">
    <location>
        <begin position="777"/>
        <end position="1449"/>
    </location>
</feature>
<feature type="region of interest" description="Fusion peptide" evidence="1">
    <location>
        <begin position="1022"/>
        <end position="1043"/>
    </location>
</feature>
<feature type="region of interest" description="Heptad repeat 1 (HR1)" evidence="2">
    <location>
        <begin position="1037"/>
        <end position="1156"/>
    </location>
</feature>
<feature type="region of interest" description="Heptad repeat 2 (HR2)" evidence="3">
    <location>
        <begin position="1305"/>
        <end position="1402"/>
    </location>
</feature>
<feature type="coiled-coil region" evidence="1">
    <location>
        <begin position="1104"/>
        <end position="1148"/>
    </location>
</feature>
<feature type="coiled-coil region" evidence="1">
    <location>
        <begin position="1338"/>
        <end position="1380"/>
    </location>
</feature>
<feature type="short sequence motif" description="KxHxx" evidence="1">
    <location>
        <begin position="1445"/>
        <end position="1449"/>
    </location>
</feature>
<proteinExistence type="inferred from homology"/>
<accession>P18450</accession>
<accession>Q85087</accession>
<accession>Q85088</accession>
<organismHost>
    <name type="scientific">Sus scrofa</name>
    <name type="common">Pig</name>
    <dbReference type="NCBI Taxonomy" id="9823"/>
</organismHost>
<evidence type="ECO:0000255" key="1">
    <source>
        <dbReference type="HAMAP-Rule" id="MF_04200"/>
    </source>
</evidence>
<evidence type="ECO:0000255" key="2">
    <source>
        <dbReference type="PROSITE-ProRule" id="PRU01271"/>
    </source>
</evidence>
<evidence type="ECO:0000255" key="3">
    <source>
        <dbReference type="PROSITE-ProRule" id="PRU01272"/>
    </source>
</evidence>
<comment type="function">
    <text evidence="1">S1 region attaches the virion to the cell membrane by interacting with host ANPEP/aminopeptidase N, initiating the infection. Binding to the receptor probably induces conformational changes in the S glycoprotein unmasking the fusion peptide of S2 region and activating membranes fusion. S2 region belongs to the class I viral fusion protein. Under the current model, the protein has at least 3 conformational states: pre-fusion native state, pre-hairpin intermediate state, and post-fusion hairpin state. During viral and target cell membrane fusion, the coiled coil regions (heptad repeats) regions assume a trimer-of-hairpins structure, positioning the fusion peptide in close proximity to the C-terminal region of the ectodomain. The formation of this structure appears to drive apposition and subsequent fusion of viral and target cell membranes.</text>
</comment>
<comment type="subunit">
    <text evidence="1">Homotrimer. During virus morphogenesis, found in a complex with M and HE proteins. Interacts with host ANPEP.</text>
</comment>
<comment type="subcellular location">
    <subcellularLocation>
        <location evidence="1">Virion membrane</location>
        <topology evidence="1">Single-pass type I membrane protein</topology>
    </subcellularLocation>
    <subcellularLocation>
        <location evidence="1">Host endoplasmic reticulum-Golgi intermediate compartment membrane</location>
        <topology evidence="1">Single-pass type I membrane protein</topology>
    </subcellularLocation>
    <text evidence="1">Accumulates in the endoplasmic reticulum-Golgi intermediate compartment, where it participates in virus particle assembly.</text>
</comment>
<comment type="domain">
    <text evidence="1">The KxHxx motif seems to function as an ER retrieval signal.</text>
</comment>
<comment type="similarity">
    <text evidence="1">Belongs to the alphacoronaviruses spike protein family.</text>
</comment>
<comment type="caution">
    <text evidence="1">In contrast to beta- and gammacoronaviruses, S glycoprotein is not cleaved into S1 and S2.</text>
</comment>
<gene>
    <name evidence="1" type="primary">S</name>
    <name type="ORF">2</name>
</gene>